<name>PRPC_ASPFM</name>
<evidence type="ECO:0000250" key="1">
    <source>
        <dbReference type="UniProtKB" id="B0YD89"/>
    </source>
</evidence>
<evidence type="ECO:0000250" key="2">
    <source>
        <dbReference type="UniProtKB" id="O34002"/>
    </source>
</evidence>
<evidence type="ECO:0000250" key="3">
    <source>
        <dbReference type="UniProtKB" id="P31660"/>
    </source>
</evidence>
<evidence type="ECO:0000255" key="4"/>
<evidence type="ECO:0000269" key="5">
    <source>
    </source>
</evidence>
<evidence type="ECO:0000269" key="6">
    <source>
    </source>
</evidence>
<evidence type="ECO:0000303" key="7">
    <source>
    </source>
</evidence>
<evidence type="ECO:0000303" key="8">
    <source>
    </source>
</evidence>
<evidence type="ECO:0000305" key="9"/>
<evidence type="ECO:0000312" key="10">
    <source>
        <dbReference type="EMBL" id="CAI61947.1"/>
    </source>
</evidence>
<sequence length="465" mass="51412">MAMTMRSTRHASKLAQTARLALTNSRRYSTAEPDLKTALKAVIPAKRELFKQVKERSDEVIGEVKVANVIGGMRGLKSMLWEGSVLDPEEGIRFHGKTIKDCQKELPKGTSGTEMLPEAMFWLLLTGQVPSTNQVRAFSRELAEQSHLPQHILDLIKSFPRSMHPMTQLSIAVAALNTESKFAKAYEKGLSKADYWEPTFDDSISLLAKIPRVAALVFRPDEVDQVGTQALDASQDWSYNFAELLGKGGKENQDFHDLLRLYLALHGDHEGGNVSAHATHLVGSALSDPFLSYSAGLLGLAGPLHGLAAQEVLRWILAMQDKIGTKFTDDDVRNYLWDTLKSGRVVPGYGHGVLRKPDPRFQALMDFAATRPDVLANPVFQLVKKNSEIAPAVLTEHGKTKNPHPNVDAASGVLFYHYGFQQPLYYTVTFGVSRALGPLVQLIWDRALGLPIERPKSINLLGLKK</sequence>
<keyword id="KW-0012">Acyltransferase</keyword>
<keyword id="KW-0903">Direct protein sequencing</keyword>
<keyword id="KW-0496">Mitochondrion</keyword>
<keyword id="KW-0808">Transferase</keyword>
<keyword id="KW-0809">Transit peptide</keyword>
<gene>
    <name evidence="7" type="primary">mcsA</name>
    <name evidence="8" type="synonym">cit1</name>
</gene>
<proteinExistence type="evidence at protein level"/>
<comment type="function">
    <text evidence="5">Component of the methylcitrate cycle that catalyzes the synthesis of (2S,3S)-2-methylcitrate from propionyl-CoA and oxaloacetate. Plays an important role in detoxification of propionyl-CoA, an inhibitor of both primary and secondary metabolism. Also has citrate synthase activity using as substrates acetyl-CoA and oxaloacetate. May play a role in virulence.</text>
</comment>
<comment type="catalytic activity">
    <reaction evidence="5">
        <text>propanoyl-CoA + oxaloacetate + H2O = (2S,3S)-2-methylcitrate + CoA + H(+)</text>
        <dbReference type="Rhea" id="RHEA:23780"/>
        <dbReference type="ChEBI" id="CHEBI:15377"/>
        <dbReference type="ChEBI" id="CHEBI:15378"/>
        <dbReference type="ChEBI" id="CHEBI:16452"/>
        <dbReference type="ChEBI" id="CHEBI:57287"/>
        <dbReference type="ChEBI" id="CHEBI:57392"/>
        <dbReference type="ChEBI" id="CHEBI:58853"/>
        <dbReference type="EC" id="2.3.3.5"/>
    </reaction>
</comment>
<comment type="catalytic activity">
    <reaction evidence="5">
        <text>oxaloacetate + acetyl-CoA + H2O = citrate + CoA + H(+)</text>
        <dbReference type="Rhea" id="RHEA:16845"/>
        <dbReference type="ChEBI" id="CHEBI:15377"/>
        <dbReference type="ChEBI" id="CHEBI:15378"/>
        <dbReference type="ChEBI" id="CHEBI:16452"/>
        <dbReference type="ChEBI" id="CHEBI:16947"/>
        <dbReference type="ChEBI" id="CHEBI:57287"/>
        <dbReference type="ChEBI" id="CHEBI:57288"/>
        <dbReference type="EC" id="2.3.3.16"/>
    </reaction>
</comment>
<comment type="biophysicochemical properties">
    <kinetics>
        <KM evidence="5">1.9 uM for propionyl-CoA</KM>
        <KM evidence="5">2.6 uM for acetyl-CoA</KM>
        <KM evidence="5">2.7 uM for oxaloacetate</KM>
    </kinetics>
    <phDependence>
        <text evidence="5">Optimum pH is 8.0-9.0.</text>
    </phDependence>
    <temperatureDependence>
        <text evidence="5">Optimum temperature is 50-60 degrees Celsius.</text>
    </temperatureDependence>
</comment>
<comment type="pathway">
    <text evidence="9">Organic acid metabolism; propanoate degradation.</text>
</comment>
<comment type="subunit">
    <text evidence="1">Homodimer.</text>
</comment>
<comment type="subcellular location">
    <subcellularLocation>
        <location evidence="9">Mitochondrion matrix</location>
    </subcellularLocation>
</comment>
<comment type="developmental stage">
    <text evidence="6">Highly expressed in conidia.</text>
</comment>
<comment type="disruption phenotype">
    <text evidence="5">Leads to the inability to grow on propionate as the sole carbon source, a strong reduction of growth rate and spore color formation on media containing both glucose and propionate, and an accumulation of propionyl-CoA. Also leads to an attenuation of virulence in an insect infection model.</text>
</comment>
<comment type="similarity">
    <text evidence="9">Belongs to the citrate synthase family.</text>
</comment>
<accession>Q50I20</accession>
<accession>Q4WD58</accession>
<dbReference type="EC" id="2.3.3.5" evidence="5"/>
<dbReference type="EC" id="2.3.3.16" evidence="5"/>
<dbReference type="EMBL" id="AJ888885">
    <property type="protein sequence ID" value="CAI61947.1"/>
    <property type="molecule type" value="mRNA"/>
</dbReference>
<dbReference type="SMR" id="Q50I20"/>
<dbReference type="OMA" id="IDHGFNA"/>
<dbReference type="BRENDA" id="2.3.3.5">
    <property type="organism ID" value="508"/>
</dbReference>
<dbReference type="UniPathway" id="UPA00946"/>
<dbReference type="GO" id="GO:0005759">
    <property type="term" value="C:mitochondrial matrix"/>
    <property type="evidence" value="ECO:0007669"/>
    <property type="project" value="UniProtKB-SubCell"/>
</dbReference>
<dbReference type="GO" id="GO:0050440">
    <property type="term" value="F:2-methylcitrate synthase activity"/>
    <property type="evidence" value="ECO:0007669"/>
    <property type="project" value="UniProtKB-EC"/>
</dbReference>
<dbReference type="GO" id="GO:0004108">
    <property type="term" value="F:citrate (Si)-synthase activity"/>
    <property type="evidence" value="ECO:0007669"/>
    <property type="project" value="EnsemblFungi"/>
</dbReference>
<dbReference type="GO" id="GO:0005975">
    <property type="term" value="P:carbohydrate metabolic process"/>
    <property type="evidence" value="ECO:0007669"/>
    <property type="project" value="TreeGrafter"/>
</dbReference>
<dbReference type="GO" id="GO:0019543">
    <property type="term" value="P:propionate catabolic process"/>
    <property type="evidence" value="ECO:0000315"/>
    <property type="project" value="AspGD"/>
</dbReference>
<dbReference type="GO" id="GO:0019629">
    <property type="term" value="P:propionate catabolic process, 2-methylcitrate cycle"/>
    <property type="evidence" value="ECO:0007669"/>
    <property type="project" value="EnsemblFungi"/>
</dbReference>
<dbReference type="GO" id="GO:0006099">
    <property type="term" value="P:tricarboxylic acid cycle"/>
    <property type="evidence" value="ECO:0007669"/>
    <property type="project" value="EnsemblFungi"/>
</dbReference>
<dbReference type="FunFam" id="1.10.230.10:FF:000001">
    <property type="entry name" value="Citrate synthase"/>
    <property type="match status" value="1"/>
</dbReference>
<dbReference type="FunFam" id="1.10.580.10:FF:000001">
    <property type="entry name" value="Citrate synthase"/>
    <property type="match status" value="1"/>
</dbReference>
<dbReference type="Gene3D" id="1.10.580.10">
    <property type="entry name" value="Citrate Synthase, domain 1"/>
    <property type="match status" value="1"/>
</dbReference>
<dbReference type="Gene3D" id="1.10.230.10">
    <property type="entry name" value="Cytochrome P450-Terp, domain 2"/>
    <property type="match status" value="1"/>
</dbReference>
<dbReference type="InterPro" id="IPR016142">
    <property type="entry name" value="Citrate_synth-like_lrg_a-sub"/>
</dbReference>
<dbReference type="InterPro" id="IPR016143">
    <property type="entry name" value="Citrate_synth-like_sm_a-sub"/>
</dbReference>
<dbReference type="InterPro" id="IPR002020">
    <property type="entry name" value="Citrate_synthase"/>
</dbReference>
<dbReference type="InterPro" id="IPR019810">
    <property type="entry name" value="Citrate_synthase_AS"/>
</dbReference>
<dbReference type="InterPro" id="IPR036969">
    <property type="entry name" value="Citrate_synthase_sf"/>
</dbReference>
<dbReference type="NCBIfam" id="NF007128">
    <property type="entry name" value="PRK09569.1"/>
    <property type="match status" value="1"/>
</dbReference>
<dbReference type="PANTHER" id="PTHR11739">
    <property type="entry name" value="CITRATE SYNTHASE"/>
    <property type="match status" value="1"/>
</dbReference>
<dbReference type="PANTHER" id="PTHR11739:SF15">
    <property type="entry name" value="CITRATE SYNTHASE 3, MITOCHONDRIAL"/>
    <property type="match status" value="1"/>
</dbReference>
<dbReference type="Pfam" id="PF00285">
    <property type="entry name" value="Citrate_synt"/>
    <property type="match status" value="1"/>
</dbReference>
<dbReference type="PRINTS" id="PR00143">
    <property type="entry name" value="CITRTSNTHASE"/>
</dbReference>
<dbReference type="SUPFAM" id="SSF48256">
    <property type="entry name" value="Citrate synthase"/>
    <property type="match status" value="1"/>
</dbReference>
<dbReference type="PROSITE" id="PS00480">
    <property type="entry name" value="CITRATE_SYNTHASE"/>
    <property type="match status" value="1"/>
</dbReference>
<protein>
    <recommendedName>
        <fullName evidence="9">2-methylcitrate synthase, mitochondrial</fullName>
        <shortName evidence="7">Methylcitrate synthase</shortName>
        <ecNumber evidence="5">2.3.3.5</ecNumber>
    </recommendedName>
    <alternativeName>
        <fullName evidence="3">(2S,3S)-2-methylcitrate synthase</fullName>
    </alternativeName>
    <alternativeName>
        <fullName evidence="9">Citrate synthase 1</fullName>
        <ecNumber evidence="5">2.3.3.16</ecNumber>
    </alternativeName>
</protein>
<reference key="1">
    <citation type="journal article" date="2005" name="FEBS J.">
        <title>Methylcitrate synthase from Aspergillus fumigatus. Propionyl-CoA affects polyketide synthesis, growth and morphology of conidia.</title>
        <authorList>
            <person name="Maerker C."/>
            <person name="Rohde M."/>
            <person name="Brakhage A.A."/>
            <person name="Brock M."/>
        </authorList>
    </citation>
    <scope>NUCLEOTIDE SEQUENCE [MRNA]</scope>
    <scope>PROTEIN SEQUENCE OF 29-55</scope>
    <scope>TRANSIT PEPTIDE</scope>
    <scope>FUNCTION</scope>
    <scope>CATALYTIC ACTIVITY</scope>
    <scope>BIOPHYSICOCHEMICAL PROPERTIES</scope>
    <scope>DISRUPTION PHENOTYPE</scope>
    <source>
        <strain>ATCC 46645 / NCPF 2109</strain>
    </source>
</reference>
<reference key="2">
    <citation type="journal article" date="2010" name="J. Proteome Res.">
        <title>Proteome profiling and functional classification of intracellular proteins from conidia of the human-pathogenic mold Aspergillus fumigatus.</title>
        <authorList>
            <person name="Teutschbein J."/>
            <person name="Albrecht D."/>
            <person name="Potsch M."/>
            <person name="Guthke R."/>
            <person name="Aimanianda V."/>
            <person name="Clavaud C."/>
            <person name="Latge J.P."/>
            <person name="Brakhage A.A."/>
            <person name="Kniemeyer O."/>
        </authorList>
    </citation>
    <scope>IDENTIFICATION BY MASS SPECTROMETRY</scope>
    <scope>DEVELOPMENTAL STAGE</scope>
    <source>
        <strain>ATCC 46645 / NCPF 2109</strain>
    </source>
</reference>
<feature type="transit peptide" description="Mitochondrion" evidence="5">
    <location>
        <begin position="1"/>
        <end position="28"/>
    </location>
</feature>
<feature type="chain" id="PRO_5000074390" description="2-methylcitrate synthase, mitochondrial" evidence="4">
    <location>
        <begin position="29"/>
        <end position="465"/>
    </location>
</feature>
<feature type="active site" evidence="2">
    <location>
        <position position="305"/>
    </location>
</feature>
<feature type="active site" evidence="2">
    <location>
        <position position="351"/>
    </location>
</feature>
<feature type="active site" evidence="2">
    <location>
        <position position="408"/>
    </location>
</feature>
<feature type="binding site" description="in chain B" evidence="1">
    <location>
        <position position="74"/>
    </location>
    <ligand>
        <name>CoA</name>
        <dbReference type="ChEBI" id="CHEBI:57287"/>
        <note>ligand shared between homodimeric partners</note>
    </ligand>
</feature>
<feature type="binding site" description="in chain A" evidence="1">
    <location>
        <position position="192"/>
    </location>
    <ligand>
        <name>CoA</name>
        <dbReference type="ChEBI" id="CHEBI:57287"/>
        <note>ligand shared between homodimeric partners</note>
    </ligand>
</feature>
<feature type="binding site" description="in chain A" evidence="1">
    <location>
        <position position="269"/>
    </location>
    <ligand>
        <name>oxaloacetate</name>
        <dbReference type="ChEBI" id="CHEBI:16452"/>
        <note>ligand shared between homodimeric partners</note>
    </ligand>
</feature>
<feature type="binding site" description="in chain B" evidence="1">
    <location>
        <position position="304"/>
    </location>
    <ligand>
        <name>CoA</name>
        <dbReference type="ChEBI" id="CHEBI:57287"/>
        <note>ligand shared between homodimeric partners</note>
    </ligand>
</feature>
<feature type="binding site" description="in chain B" evidence="1">
    <location>
        <position position="346"/>
    </location>
    <ligand>
        <name>CoA</name>
        <dbReference type="ChEBI" id="CHEBI:57287"/>
        <note>ligand shared between homodimeric partners</note>
    </ligand>
</feature>
<feature type="binding site" description="in chain B" evidence="1">
    <location>
        <position position="348"/>
    </location>
    <ligand>
        <name>CoA</name>
        <dbReference type="ChEBI" id="CHEBI:57287"/>
        <note>ligand shared between homodimeric partners</note>
    </ligand>
</feature>
<feature type="binding site" description="in chain B" evidence="1">
    <location>
        <position position="349"/>
    </location>
    <ligand>
        <name>CoA</name>
        <dbReference type="ChEBI" id="CHEBI:57287"/>
        <note>ligand shared between homodimeric partners</note>
    </ligand>
</feature>
<feature type="binding site" description="in chain A" evidence="1">
    <location>
        <position position="351"/>
    </location>
    <ligand>
        <name>oxaloacetate</name>
        <dbReference type="ChEBI" id="CHEBI:16452"/>
        <note>ligand shared between homodimeric partners</note>
    </ligand>
</feature>
<feature type="binding site" description="in chain A" evidence="1">
    <location>
        <position position="360"/>
    </location>
    <ligand>
        <name>oxaloacetate</name>
        <dbReference type="ChEBI" id="CHEBI:16452"/>
        <note>ligand shared between homodimeric partners</note>
    </ligand>
</feature>
<feature type="binding site" description="in chain B" evidence="1">
    <location>
        <position position="400"/>
    </location>
    <ligand>
        <name>CoA</name>
        <dbReference type="ChEBI" id="CHEBI:57287"/>
        <note>ligand shared between homodimeric partners</note>
    </ligand>
</feature>
<feature type="binding site" description="in chain B" evidence="1">
    <location>
        <position position="401"/>
    </location>
    <ligand>
        <name>CoA</name>
        <dbReference type="ChEBI" id="CHEBI:57287"/>
        <note>ligand shared between homodimeric partners</note>
    </ligand>
</feature>
<feature type="binding site" description="in chain B" evidence="1">
    <location>
        <position position="406"/>
    </location>
    <ligand>
        <name>CoA</name>
        <dbReference type="ChEBI" id="CHEBI:57287"/>
        <note>ligand shared between homodimeric partners</note>
    </ligand>
</feature>
<feature type="binding site" description="in chain A" evidence="1">
    <location>
        <position position="434"/>
    </location>
    <ligand>
        <name>oxaloacetate</name>
        <dbReference type="ChEBI" id="CHEBI:16452"/>
        <note>ligand shared between homodimeric partners</note>
    </ligand>
</feature>
<feature type="binding site" description="in chain B" evidence="1">
    <location>
        <position position="454"/>
    </location>
    <ligand>
        <name>oxaloacetate</name>
        <dbReference type="ChEBI" id="CHEBI:16452"/>
        <note>ligand shared between homodimeric partners</note>
    </ligand>
</feature>
<organism evidence="10">
    <name type="scientific">Aspergillus fumigatus</name>
    <name type="common">Neosartorya fumigata</name>
    <dbReference type="NCBI Taxonomy" id="746128"/>
    <lineage>
        <taxon>Eukaryota</taxon>
        <taxon>Fungi</taxon>
        <taxon>Dikarya</taxon>
        <taxon>Ascomycota</taxon>
        <taxon>Pezizomycotina</taxon>
        <taxon>Eurotiomycetes</taxon>
        <taxon>Eurotiomycetidae</taxon>
        <taxon>Eurotiales</taxon>
        <taxon>Aspergillaceae</taxon>
        <taxon>Aspergillus</taxon>
        <taxon>Aspergillus subgen. Fumigati</taxon>
    </lineage>
</organism>